<name>RMUC_VIBCH</name>
<reference key="1">
    <citation type="journal article" date="2000" name="Nature">
        <title>DNA sequence of both chromosomes of the cholera pathogen Vibrio cholerae.</title>
        <authorList>
            <person name="Heidelberg J.F."/>
            <person name="Eisen J.A."/>
            <person name="Nelson W.C."/>
            <person name="Clayton R.A."/>
            <person name="Gwinn M.L."/>
            <person name="Dodson R.J."/>
            <person name="Haft D.H."/>
            <person name="Hickey E.K."/>
            <person name="Peterson J.D."/>
            <person name="Umayam L.A."/>
            <person name="Gill S.R."/>
            <person name="Nelson K.E."/>
            <person name="Read T.D."/>
            <person name="Tettelin H."/>
            <person name="Richardson D.L."/>
            <person name="Ermolaeva M.D."/>
            <person name="Vamathevan J.J."/>
            <person name="Bass S."/>
            <person name="Qin H."/>
            <person name="Dragoi I."/>
            <person name="Sellers P."/>
            <person name="McDonald L.A."/>
            <person name="Utterback T.R."/>
            <person name="Fleischmann R.D."/>
            <person name="Nierman W.C."/>
            <person name="White O."/>
            <person name="Salzberg S.L."/>
            <person name="Smith H.O."/>
            <person name="Colwell R.R."/>
            <person name="Mekalanos J.J."/>
            <person name="Venter J.C."/>
            <person name="Fraser C.M."/>
        </authorList>
    </citation>
    <scope>NUCLEOTIDE SEQUENCE [LARGE SCALE GENOMIC DNA]</scope>
    <source>
        <strain>ATCC 39315 / El Tor Inaba N16961</strain>
    </source>
</reference>
<keyword id="KW-0175">Coiled coil</keyword>
<keyword id="KW-0233">DNA recombination</keyword>
<keyword id="KW-1185">Reference proteome</keyword>
<dbReference type="EMBL" id="AE003852">
    <property type="protein sequence ID" value="AAF93260.1"/>
    <property type="molecule type" value="Genomic_DNA"/>
</dbReference>
<dbReference type="PIR" id="C82366">
    <property type="entry name" value="C82366"/>
</dbReference>
<dbReference type="RefSeq" id="NP_229741.1">
    <property type="nucleotide sequence ID" value="NC_002505.1"/>
</dbReference>
<dbReference type="SMR" id="Q9KVQ7"/>
<dbReference type="STRING" id="243277.VC_0082"/>
<dbReference type="DNASU" id="2615257"/>
<dbReference type="EnsemblBacteria" id="AAF93260">
    <property type="protein sequence ID" value="AAF93260"/>
    <property type="gene ID" value="VC_0082"/>
</dbReference>
<dbReference type="KEGG" id="vch:VC_0082"/>
<dbReference type="PATRIC" id="fig|243277.26.peg.79"/>
<dbReference type="eggNOG" id="COG1322">
    <property type="taxonomic scope" value="Bacteria"/>
</dbReference>
<dbReference type="HOGENOM" id="CLU_024057_0_0_6"/>
<dbReference type="Proteomes" id="UP000000584">
    <property type="component" value="Chromosome 1"/>
</dbReference>
<dbReference type="GO" id="GO:0006310">
    <property type="term" value="P:DNA recombination"/>
    <property type="evidence" value="ECO:0000318"/>
    <property type="project" value="GO_Central"/>
</dbReference>
<dbReference type="InterPro" id="IPR003798">
    <property type="entry name" value="DNA_recombination_RmuC"/>
</dbReference>
<dbReference type="PANTHER" id="PTHR30563">
    <property type="entry name" value="DNA RECOMBINATION PROTEIN RMUC"/>
    <property type="match status" value="1"/>
</dbReference>
<dbReference type="PANTHER" id="PTHR30563:SF0">
    <property type="entry name" value="DNA RECOMBINATION PROTEIN RMUC"/>
    <property type="match status" value="1"/>
</dbReference>
<dbReference type="Pfam" id="PF02646">
    <property type="entry name" value="RmuC"/>
    <property type="match status" value="1"/>
</dbReference>
<comment type="function">
    <text evidence="1">Involved in DNA recombination.</text>
</comment>
<comment type="similarity">
    <text evidence="4">Belongs to the RmuC family.</text>
</comment>
<gene>
    <name type="primary">rmuC</name>
    <name type="ordered locus">VC_0082</name>
</gene>
<accession>Q9KVQ7</accession>
<organism>
    <name type="scientific">Vibrio cholerae serotype O1 (strain ATCC 39315 / El Tor Inaba N16961)</name>
    <dbReference type="NCBI Taxonomy" id="243277"/>
    <lineage>
        <taxon>Bacteria</taxon>
        <taxon>Pseudomonadati</taxon>
        <taxon>Pseudomonadota</taxon>
        <taxon>Gammaproteobacteria</taxon>
        <taxon>Vibrionales</taxon>
        <taxon>Vibrionaceae</taxon>
        <taxon>Vibrio</taxon>
    </lineage>
</organism>
<proteinExistence type="inferred from homology"/>
<sequence>MFNMQWIFENQSALWSALVSAGATGVAIGWWVKQRYQLKTQLLEQQLEQQSHWHAQQIQQLNEQLTTAQQELDELDALRDKNEFELKQSHGKLMAVLEKLRYFEAVKQERQQYADELNQVRAAKAELESQLREQEARHQQQLVASQEKLQLLERAEERLKQQFEHLANQVFEHKTATVDVQNRQSLEGLLTPLKEQLEGFKKQVNDSFNHEAKERHTLVHELRNLQRLNEQMAKEAVNLTQALKGDNKQQGNWGEVVLARVLAESGLREGHEYQTQVSLQNEAGKRYQPDVIVHLPQNKQVVIDSKMALVAYERYFHAETDSERDSALREHLLALRNHIRGLGQKDYHQLKGIQSLDYVLMFIPVEPAFQVAIQADPSLVNDAMEQNIILVSPTTLLVALRTIDNLWRNERQNQNAQLIAERASKLYDKLRLFVEDMEGLGGALDKANQSYQGAMNKLVTGRGNAIRQAESFKQLGVEIKRSIPQPLIERAQQAPDQENAPLVERHPIEDKVN</sequence>
<evidence type="ECO:0000250" key="1"/>
<evidence type="ECO:0000255" key="2"/>
<evidence type="ECO:0000256" key="3">
    <source>
        <dbReference type="SAM" id="MobiDB-lite"/>
    </source>
</evidence>
<evidence type="ECO:0000305" key="4"/>
<feature type="chain" id="PRO_0000202051" description="DNA recombination protein RmuC homolog">
    <location>
        <begin position="1"/>
        <end position="513"/>
    </location>
</feature>
<feature type="region of interest" description="Disordered" evidence="3">
    <location>
        <begin position="490"/>
        <end position="513"/>
    </location>
</feature>
<feature type="coiled-coil region" evidence="2">
    <location>
        <begin position="36"/>
        <end position="250"/>
    </location>
</feature>
<feature type="compositionally biased region" description="Basic and acidic residues" evidence="3">
    <location>
        <begin position="503"/>
        <end position="513"/>
    </location>
</feature>
<protein>
    <recommendedName>
        <fullName>DNA recombination protein RmuC homolog</fullName>
    </recommendedName>
</protein>